<protein>
    <recommendedName>
        <fullName>Uncharacterized protein C18G6.12c</fullName>
    </recommendedName>
</protein>
<reference key="1">
    <citation type="journal article" date="2002" name="Nature">
        <title>The genome sequence of Schizosaccharomyces pombe.</title>
        <authorList>
            <person name="Wood V."/>
            <person name="Gwilliam R."/>
            <person name="Rajandream M.A."/>
            <person name="Lyne M.H."/>
            <person name="Lyne R."/>
            <person name="Stewart A."/>
            <person name="Sgouros J.G."/>
            <person name="Peat N."/>
            <person name="Hayles J."/>
            <person name="Baker S.G."/>
            <person name="Basham D."/>
            <person name="Bowman S."/>
            <person name="Brooks K."/>
            <person name="Brown D."/>
            <person name="Brown S."/>
            <person name="Chillingworth T."/>
            <person name="Churcher C.M."/>
            <person name="Collins M."/>
            <person name="Connor R."/>
            <person name="Cronin A."/>
            <person name="Davis P."/>
            <person name="Feltwell T."/>
            <person name="Fraser A."/>
            <person name="Gentles S."/>
            <person name="Goble A."/>
            <person name="Hamlin N."/>
            <person name="Harris D.E."/>
            <person name="Hidalgo J."/>
            <person name="Hodgson G."/>
            <person name="Holroyd S."/>
            <person name="Hornsby T."/>
            <person name="Howarth S."/>
            <person name="Huckle E.J."/>
            <person name="Hunt S."/>
            <person name="Jagels K."/>
            <person name="James K.D."/>
            <person name="Jones L."/>
            <person name="Jones M."/>
            <person name="Leather S."/>
            <person name="McDonald S."/>
            <person name="McLean J."/>
            <person name="Mooney P."/>
            <person name="Moule S."/>
            <person name="Mungall K.L."/>
            <person name="Murphy L.D."/>
            <person name="Niblett D."/>
            <person name="Odell C."/>
            <person name="Oliver K."/>
            <person name="O'Neil S."/>
            <person name="Pearson D."/>
            <person name="Quail M.A."/>
            <person name="Rabbinowitsch E."/>
            <person name="Rutherford K.M."/>
            <person name="Rutter S."/>
            <person name="Saunders D."/>
            <person name="Seeger K."/>
            <person name="Sharp S."/>
            <person name="Skelton J."/>
            <person name="Simmonds M.N."/>
            <person name="Squares R."/>
            <person name="Squares S."/>
            <person name="Stevens K."/>
            <person name="Taylor K."/>
            <person name="Taylor R.G."/>
            <person name="Tivey A."/>
            <person name="Walsh S.V."/>
            <person name="Warren T."/>
            <person name="Whitehead S."/>
            <person name="Woodward J.R."/>
            <person name="Volckaert G."/>
            <person name="Aert R."/>
            <person name="Robben J."/>
            <person name="Grymonprez B."/>
            <person name="Weltjens I."/>
            <person name="Vanstreels E."/>
            <person name="Rieger M."/>
            <person name="Schaefer M."/>
            <person name="Mueller-Auer S."/>
            <person name="Gabel C."/>
            <person name="Fuchs M."/>
            <person name="Duesterhoeft A."/>
            <person name="Fritzc C."/>
            <person name="Holzer E."/>
            <person name="Moestl D."/>
            <person name="Hilbert H."/>
            <person name="Borzym K."/>
            <person name="Langer I."/>
            <person name="Beck A."/>
            <person name="Lehrach H."/>
            <person name="Reinhardt R."/>
            <person name="Pohl T.M."/>
            <person name="Eger P."/>
            <person name="Zimmermann W."/>
            <person name="Wedler H."/>
            <person name="Wambutt R."/>
            <person name="Purnelle B."/>
            <person name="Goffeau A."/>
            <person name="Cadieu E."/>
            <person name="Dreano S."/>
            <person name="Gloux S."/>
            <person name="Lelaure V."/>
            <person name="Mottier S."/>
            <person name="Galibert F."/>
            <person name="Aves S.J."/>
            <person name="Xiang Z."/>
            <person name="Hunt C."/>
            <person name="Moore K."/>
            <person name="Hurst S.M."/>
            <person name="Lucas M."/>
            <person name="Rochet M."/>
            <person name="Gaillardin C."/>
            <person name="Tallada V.A."/>
            <person name="Garzon A."/>
            <person name="Thode G."/>
            <person name="Daga R.R."/>
            <person name="Cruzado L."/>
            <person name="Jimenez J."/>
            <person name="Sanchez M."/>
            <person name="del Rey F."/>
            <person name="Benito J."/>
            <person name="Dominguez A."/>
            <person name="Revuelta J.L."/>
            <person name="Moreno S."/>
            <person name="Armstrong J."/>
            <person name="Forsburg S.L."/>
            <person name="Cerutti L."/>
            <person name="Lowe T."/>
            <person name="McCombie W.R."/>
            <person name="Paulsen I."/>
            <person name="Potashkin J."/>
            <person name="Shpakovski G.V."/>
            <person name="Ussery D."/>
            <person name="Barrell B.G."/>
            <person name="Nurse P."/>
        </authorList>
    </citation>
    <scope>NUCLEOTIDE SEQUENCE [LARGE SCALE GENOMIC DNA]</scope>
    <source>
        <strain>972 / ATCC 24843</strain>
    </source>
</reference>
<proteinExistence type="predicted"/>
<dbReference type="EMBL" id="CU329670">
    <property type="protein sequence ID" value="CAA92390.1"/>
    <property type="molecule type" value="Genomic_DNA"/>
</dbReference>
<dbReference type="PIR" id="T37925">
    <property type="entry name" value="T37925"/>
</dbReference>
<dbReference type="RefSeq" id="NP_593675.1">
    <property type="nucleotide sequence ID" value="NM_001019107.2"/>
</dbReference>
<dbReference type="SMR" id="Q10111"/>
<dbReference type="BioGRID" id="278979">
    <property type="interactions" value="11"/>
</dbReference>
<dbReference type="STRING" id="284812.Q10111"/>
<dbReference type="iPTMnet" id="Q10111"/>
<dbReference type="PaxDb" id="4896-SPAC18G6.12c.1"/>
<dbReference type="EnsemblFungi" id="SPAC18G6.12c.1">
    <property type="protein sequence ID" value="SPAC18G6.12c.1:pep"/>
    <property type="gene ID" value="SPAC18G6.12c"/>
</dbReference>
<dbReference type="KEGG" id="spo:2542521"/>
<dbReference type="PomBase" id="SPAC18G6.12c"/>
<dbReference type="VEuPathDB" id="FungiDB:SPAC18G6.12c"/>
<dbReference type="eggNOG" id="ENOG502R0B6">
    <property type="taxonomic scope" value="Eukaryota"/>
</dbReference>
<dbReference type="HOGENOM" id="CLU_900652_0_0_1"/>
<dbReference type="InParanoid" id="Q10111"/>
<dbReference type="OMA" id="TIPVWME"/>
<dbReference type="PRO" id="PR:Q10111"/>
<dbReference type="Proteomes" id="UP000002485">
    <property type="component" value="Chromosome I"/>
</dbReference>
<dbReference type="GO" id="GO:0005737">
    <property type="term" value="C:cytoplasm"/>
    <property type="evidence" value="ECO:0007005"/>
    <property type="project" value="PomBase"/>
</dbReference>
<dbReference type="GO" id="GO:0003824">
    <property type="term" value="F:catalytic activity"/>
    <property type="evidence" value="ECO:0000255"/>
    <property type="project" value="PomBase"/>
</dbReference>
<dbReference type="FunFam" id="3.40.50.880:FF:000167">
    <property type="entry name" value="Uncharacterized protein C18G6.12c"/>
    <property type="match status" value="1"/>
</dbReference>
<dbReference type="Gene3D" id="3.40.50.880">
    <property type="match status" value="1"/>
</dbReference>
<dbReference type="InterPro" id="IPR029062">
    <property type="entry name" value="Class_I_gatase-like"/>
</dbReference>
<dbReference type="InterPro" id="IPR032633">
    <property type="entry name" value="ThiJ-like"/>
</dbReference>
<dbReference type="PANTHER" id="PTHR43068">
    <property type="entry name" value="SLR1854 PROTEIN"/>
    <property type="match status" value="1"/>
</dbReference>
<dbReference type="PANTHER" id="PTHR43068:SF1">
    <property type="entry name" value="SLR1854 PROTEIN"/>
    <property type="match status" value="1"/>
</dbReference>
<dbReference type="Pfam" id="PF17124">
    <property type="entry name" value="ThiJ_like"/>
    <property type="match status" value="1"/>
</dbReference>
<dbReference type="SUPFAM" id="SSF52317">
    <property type="entry name" value="Class I glutamine amidotransferase-like"/>
    <property type="match status" value="1"/>
</dbReference>
<gene>
    <name type="ORF">SPAC18G6.12c</name>
</gene>
<comment type="similarity">
    <text evidence="1">To S.pombe SpAC14C4.04.</text>
</comment>
<sequence length="309" mass="35297">MAFSFQVSKMNSFDNYNAAIHPKHDLISVNAPVFGKDAKLSPHLAIVLADKGFMLEQVCLPWRYFTDRGFVVEFVIAESIFPPRPPKPNDSYMTGWKSHVLGASKEILDIYSVLCTLNEFNNPKCYRSNGFTFDNFSAVFITGGRNPFVREMLEDPLLHASLVPYIHSCRTIQPDEEVKDNRKIKVLGAISQGAAAIYLAEPNINMKTTTIPAWMERSNSFLNPTPDNSTYPYAATIIPKDKYVSGPYRRVAFTYQDENYYYISGRSNKDIGELSKKMYLMYKQAYKDLNASLRERRRRSTSNRRNSGI</sequence>
<feature type="chain" id="PRO_0000116461" description="Uncharacterized protein C18G6.12c">
    <location>
        <begin position="1"/>
        <end position="309"/>
    </location>
</feature>
<accession>Q10111</accession>
<name>YAQC_SCHPO</name>
<evidence type="ECO:0000305" key="1"/>
<keyword id="KW-1185">Reference proteome</keyword>
<organism>
    <name type="scientific">Schizosaccharomyces pombe (strain 972 / ATCC 24843)</name>
    <name type="common">Fission yeast</name>
    <dbReference type="NCBI Taxonomy" id="284812"/>
    <lineage>
        <taxon>Eukaryota</taxon>
        <taxon>Fungi</taxon>
        <taxon>Dikarya</taxon>
        <taxon>Ascomycota</taxon>
        <taxon>Taphrinomycotina</taxon>
        <taxon>Schizosaccharomycetes</taxon>
        <taxon>Schizosaccharomycetales</taxon>
        <taxon>Schizosaccharomycetaceae</taxon>
        <taxon>Schizosaccharomyces</taxon>
    </lineage>
</organism>